<protein>
    <recommendedName>
        <fullName evidence="1">Ribosome maturation factor RimP</fullName>
    </recommendedName>
</protein>
<sequence length="207" mass="22625">MPSTGLDKKPDSGATDLAALDTHLIAPPGVARRVFEQLRAPAEGAGFEIVRVRFGVQDGQTLQIMAERPDGSMTVEDCAELSRMLSALLDVEDPIPGEYHLEISSAGIDRPLTRPKDFERWSGFEVKVGLSEPLSGRKRFRGILQGVEDDEVLVECDIEGFSEPQVLGLPFRQLSEAKLVMSDDLIRESLKRQGPVNDDPDAPADGE</sequence>
<feature type="chain" id="PRO_0000384725" description="Ribosome maturation factor RimP">
    <location>
        <begin position="1"/>
        <end position="207"/>
    </location>
</feature>
<comment type="function">
    <text evidence="1">Required for maturation of 30S ribosomal subunits.</text>
</comment>
<comment type="subcellular location">
    <subcellularLocation>
        <location evidence="1">Cytoplasm</location>
    </subcellularLocation>
</comment>
<comment type="similarity">
    <text evidence="1">Belongs to the RimP family.</text>
</comment>
<keyword id="KW-0963">Cytoplasm</keyword>
<keyword id="KW-1185">Reference proteome</keyword>
<keyword id="KW-0690">Ribosome biogenesis</keyword>
<reference key="1">
    <citation type="journal article" date="2011" name="Stand. Genomic Sci.">
        <title>Complete genome sequence of Parvibaculum lavamentivorans type strain (DS-1(T)).</title>
        <authorList>
            <person name="Schleheck D."/>
            <person name="Weiss M."/>
            <person name="Pitluck S."/>
            <person name="Bruce D."/>
            <person name="Land M.L."/>
            <person name="Han S."/>
            <person name="Saunders E."/>
            <person name="Tapia R."/>
            <person name="Detter C."/>
            <person name="Brettin T."/>
            <person name="Han J."/>
            <person name="Woyke T."/>
            <person name="Goodwin L."/>
            <person name="Pennacchio L."/>
            <person name="Nolan M."/>
            <person name="Cook A.M."/>
            <person name="Kjelleberg S."/>
            <person name="Thomas T."/>
        </authorList>
    </citation>
    <scope>NUCLEOTIDE SEQUENCE [LARGE SCALE GENOMIC DNA]</scope>
    <source>
        <strain>DS-1 / DSM 13023 / NCIMB 13966</strain>
    </source>
</reference>
<accession>A7HZ90</accession>
<evidence type="ECO:0000255" key="1">
    <source>
        <dbReference type="HAMAP-Rule" id="MF_01077"/>
    </source>
</evidence>
<name>RIMP_PARL1</name>
<gene>
    <name evidence="1" type="primary">rimP</name>
    <name type="ordered locus">Plav_3625</name>
</gene>
<proteinExistence type="inferred from homology"/>
<dbReference type="EMBL" id="CP000774">
    <property type="protein sequence ID" value="ABS65223.1"/>
    <property type="molecule type" value="Genomic_DNA"/>
</dbReference>
<dbReference type="RefSeq" id="WP_012112484.1">
    <property type="nucleotide sequence ID" value="NC_009719.1"/>
</dbReference>
<dbReference type="SMR" id="A7HZ90"/>
<dbReference type="STRING" id="402881.Plav_3625"/>
<dbReference type="KEGG" id="pla:Plav_3625"/>
<dbReference type="eggNOG" id="COG0779">
    <property type="taxonomic scope" value="Bacteria"/>
</dbReference>
<dbReference type="HOGENOM" id="CLU_070525_0_1_5"/>
<dbReference type="OrthoDB" id="9805006at2"/>
<dbReference type="Proteomes" id="UP000006377">
    <property type="component" value="Chromosome"/>
</dbReference>
<dbReference type="GO" id="GO:0005829">
    <property type="term" value="C:cytosol"/>
    <property type="evidence" value="ECO:0007669"/>
    <property type="project" value="TreeGrafter"/>
</dbReference>
<dbReference type="GO" id="GO:0000028">
    <property type="term" value="P:ribosomal small subunit assembly"/>
    <property type="evidence" value="ECO:0007669"/>
    <property type="project" value="TreeGrafter"/>
</dbReference>
<dbReference type="GO" id="GO:0006412">
    <property type="term" value="P:translation"/>
    <property type="evidence" value="ECO:0007669"/>
    <property type="project" value="TreeGrafter"/>
</dbReference>
<dbReference type="CDD" id="cd01734">
    <property type="entry name" value="YlxS_C"/>
    <property type="match status" value="1"/>
</dbReference>
<dbReference type="Gene3D" id="2.30.30.180">
    <property type="entry name" value="Ribosome maturation factor RimP, C-terminal domain"/>
    <property type="match status" value="1"/>
</dbReference>
<dbReference type="Gene3D" id="3.30.300.70">
    <property type="entry name" value="RimP-like superfamily, N-terminal"/>
    <property type="match status" value="1"/>
</dbReference>
<dbReference type="HAMAP" id="MF_01077">
    <property type="entry name" value="RimP"/>
    <property type="match status" value="1"/>
</dbReference>
<dbReference type="InterPro" id="IPR003728">
    <property type="entry name" value="Ribosome_maturation_RimP"/>
</dbReference>
<dbReference type="InterPro" id="IPR028998">
    <property type="entry name" value="RimP_C"/>
</dbReference>
<dbReference type="InterPro" id="IPR036847">
    <property type="entry name" value="RimP_C_sf"/>
</dbReference>
<dbReference type="InterPro" id="IPR028989">
    <property type="entry name" value="RimP_N"/>
</dbReference>
<dbReference type="InterPro" id="IPR035956">
    <property type="entry name" value="RimP_N_sf"/>
</dbReference>
<dbReference type="NCBIfam" id="NF000932">
    <property type="entry name" value="PRK00092.2-5"/>
    <property type="match status" value="1"/>
</dbReference>
<dbReference type="PANTHER" id="PTHR33867">
    <property type="entry name" value="RIBOSOME MATURATION FACTOR RIMP"/>
    <property type="match status" value="1"/>
</dbReference>
<dbReference type="PANTHER" id="PTHR33867:SF1">
    <property type="entry name" value="RIBOSOME MATURATION FACTOR RIMP"/>
    <property type="match status" value="1"/>
</dbReference>
<dbReference type="Pfam" id="PF17384">
    <property type="entry name" value="DUF150_C"/>
    <property type="match status" value="1"/>
</dbReference>
<dbReference type="Pfam" id="PF02576">
    <property type="entry name" value="RimP_N"/>
    <property type="match status" value="1"/>
</dbReference>
<dbReference type="SUPFAM" id="SSF74942">
    <property type="entry name" value="YhbC-like, C-terminal domain"/>
    <property type="match status" value="1"/>
</dbReference>
<dbReference type="SUPFAM" id="SSF75420">
    <property type="entry name" value="YhbC-like, N-terminal domain"/>
    <property type="match status" value="1"/>
</dbReference>
<organism>
    <name type="scientific">Parvibaculum lavamentivorans (strain DS-1 / DSM 13023 / NCIMB 13966)</name>
    <dbReference type="NCBI Taxonomy" id="402881"/>
    <lineage>
        <taxon>Bacteria</taxon>
        <taxon>Pseudomonadati</taxon>
        <taxon>Pseudomonadota</taxon>
        <taxon>Alphaproteobacteria</taxon>
        <taxon>Hyphomicrobiales</taxon>
        <taxon>Parvibaculaceae</taxon>
        <taxon>Parvibaculum</taxon>
    </lineage>
</organism>